<keyword id="KW-0963">Cytoplasm</keyword>
<keyword id="KW-0227">DNA damage</keyword>
<keyword id="KW-0233">DNA recombination</keyword>
<keyword id="KW-0234">DNA repair</keyword>
<keyword id="KW-0238">DNA-binding</keyword>
<keyword id="KW-0255">Endonuclease</keyword>
<keyword id="KW-0378">Hydrolase</keyword>
<keyword id="KW-0460">Magnesium</keyword>
<keyword id="KW-0479">Metal-binding</keyword>
<keyword id="KW-0540">Nuclease</keyword>
<feature type="chain" id="PRO_0000183106" description="Crossover junction endodeoxyribonuclease RuvC">
    <location>
        <begin position="1"/>
        <end position="157"/>
    </location>
</feature>
<feature type="active site" evidence="1">
    <location>
        <position position="7"/>
    </location>
</feature>
<feature type="active site" evidence="1">
    <location>
        <position position="66"/>
    </location>
</feature>
<feature type="active site" evidence="1">
    <location>
        <position position="139"/>
    </location>
</feature>
<feature type="binding site" evidence="1">
    <location>
        <position position="7"/>
    </location>
    <ligand>
        <name>Mg(2+)</name>
        <dbReference type="ChEBI" id="CHEBI:18420"/>
        <label>1</label>
    </ligand>
</feature>
<feature type="binding site" evidence="1">
    <location>
        <position position="66"/>
    </location>
    <ligand>
        <name>Mg(2+)</name>
        <dbReference type="ChEBI" id="CHEBI:18420"/>
        <label>2</label>
    </ligand>
</feature>
<feature type="binding site" evidence="1">
    <location>
        <position position="139"/>
    </location>
    <ligand>
        <name>Mg(2+)</name>
        <dbReference type="ChEBI" id="CHEBI:18420"/>
        <label>1</label>
    </ligand>
</feature>
<protein>
    <recommendedName>
        <fullName evidence="1">Crossover junction endodeoxyribonuclease RuvC</fullName>
        <ecNumber evidence="1">3.1.21.10</ecNumber>
    </recommendedName>
    <alternativeName>
        <fullName evidence="1">Holliday junction nuclease RuvC</fullName>
    </alternativeName>
    <alternativeName>
        <fullName evidence="1">Holliday junction resolvase RuvC</fullName>
    </alternativeName>
</protein>
<gene>
    <name evidence="1" type="primary">ruvC</name>
    <name type="ordered locus">jhp_0811</name>
</gene>
<name>RUVC_HELPJ</name>
<dbReference type="EC" id="3.1.21.10" evidence="1"/>
<dbReference type="EMBL" id="AE001439">
    <property type="protein sequence ID" value="AAD06385.1"/>
    <property type="molecule type" value="Genomic_DNA"/>
</dbReference>
<dbReference type="PIR" id="H71885">
    <property type="entry name" value="H71885"/>
</dbReference>
<dbReference type="RefSeq" id="WP_001221155.1">
    <property type="nucleotide sequence ID" value="NZ_CP011330.1"/>
</dbReference>
<dbReference type="SMR" id="Q9ZKX3"/>
<dbReference type="KEGG" id="hpj:jhp_0811"/>
<dbReference type="PATRIC" id="fig|85963.30.peg.161"/>
<dbReference type="eggNOG" id="COG0817">
    <property type="taxonomic scope" value="Bacteria"/>
</dbReference>
<dbReference type="Proteomes" id="UP000000804">
    <property type="component" value="Chromosome"/>
</dbReference>
<dbReference type="GO" id="GO:0005737">
    <property type="term" value="C:cytoplasm"/>
    <property type="evidence" value="ECO:0007669"/>
    <property type="project" value="UniProtKB-SubCell"/>
</dbReference>
<dbReference type="GO" id="GO:0048476">
    <property type="term" value="C:Holliday junction resolvase complex"/>
    <property type="evidence" value="ECO:0007669"/>
    <property type="project" value="UniProtKB-UniRule"/>
</dbReference>
<dbReference type="GO" id="GO:0008821">
    <property type="term" value="F:crossover junction DNA endonuclease activity"/>
    <property type="evidence" value="ECO:0007669"/>
    <property type="project" value="UniProtKB-UniRule"/>
</dbReference>
<dbReference type="GO" id="GO:0003677">
    <property type="term" value="F:DNA binding"/>
    <property type="evidence" value="ECO:0007669"/>
    <property type="project" value="UniProtKB-KW"/>
</dbReference>
<dbReference type="GO" id="GO:0000287">
    <property type="term" value="F:magnesium ion binding"/>
    <property type="evidence" value="ECO:0007669"/>
    <property type="project" value="UniProtKB-UniRule"/>
</dbReference>
<dbReference type="GO" id="GO:0006310">
    <property type="term" value="P:DNA recombination"/>
    <property type="evidence" value="ECO:0007669"/>
    <property type="project" value="UniProtKB-UniRule"/>
</dbReference>
<dbReference type="GO" id="GO:0006281">
    <property type="term" value="P:DNA repair"/>
    <property type="evidence" value="ECO:0007669"/>
    <property type="project" value="UniProtKB-UniRule"/>
</dbReference>
<dbReference type="CDD" id="cd16962">
    <property type="entry name" value="RuvC"/>
    <property type="match status" value="1"/>
</dbReference>
<dbReference type="FunFam" id="3.30.420.10:FF:000002">
    <property type="entry name" value="Crossover junction endodeoxyribonuclease RuvC"/>
    <property type="match status" value="1"/>
</dbReference>
<dbReference type="Gene3D" id="3.30.420.10">
    <property type="entry name" value="Ribonuclease H-like superfamily/Ribonuclease H"/>
    <property type="match status" value="1"/>
</dbReference>
<dbReference type="HAMAP" id="MF_00034">
    <property type="entry name" value="RuvC"/>
    <property type="match status" value="1"/>
</dbReference>
<dbReference type="InterPro" id="IPR012337">
    <property type="entry name" value="RNaseH-like_sf"/>
</dbReference>
<dbReference type="InterPro" id="IPR036397">
    <property type="entry name" value="RNaseH_sf"/>
</dbReference>
<dbReference type="InterPro" id="IPR020563">
    <property type="entry name" value="X-over_junc_endoDNase_Mg_BS"/>
</dbReference>
<dbReference type="InterPro" id="IPR002176">
    <property type="entry name" value="X-over_junc_endoDNase_RuvC"/>
</dbReference>
<dbReference type="NCBIfam" id="TIGR00228">
    <property type="entry name" value="ruvC"/>
    <property type="match status" value="1"/>
</dbReference>
<dbReference type="PANTHER" id="PTHR30194">
    <property type="entry name" value="CROSSOVER JUNCTION ENDODEOXYRIBONUCLEASE RUVC"/>
    <property type="match status" value="1"/>
</dbReference>
<dbReference type="PANTHER" id="PTHR30194:SF3">
    <property type="entry name" value="CROSSOVER JUNCTION ENDODEOXYRIBONUCLEASE RUVC"/>
    <property type="match status" value="1"/>
</dbReference>
<dbReference type="Pfam" id="PF02075">
    <property type="entry name" value="RuvC"/>
    <property type="match status" value="1"/>
</dbReference>
<dbReference type="PRINTS" id="PR00696">
    <property type="entry name" value="RSOLVASERUVC"/>
</dbReference>
<dbReference type="SUPFAM" id="SSF53098">
    <property type="entry name" value="Ribonuclease H-like"/>
    <property type="match status" value="1"/>
</dbReference>
<dbReference type="PROSITE" id="PS01321">
    <property type="entry name" value="RUVC"/>
    <property type="match status" value="1"/>
</dbReference>
<sequence length="157" mass="17427">MRILGIDPGSRKCGYAIISHASNKLSLITAGFINITTTRLQEQILDLIEALDCLLDRYEVNEVAIEDIFFGYNPKSVIKLAQFRGALSLKILERIGNFSEYTPLQVKKALTGNGKAAKEQVAFMVKRLLNITSEIKPLDISDAIAVAITHAQRLKPR</sequence>
<organism>
    <name type="scientific">Helicobacter pylori (strain J99 / ATCC 700824)</name>
    <name type="common">Campylobacter pylori J99</name>
    <dbReference type="NCBI Taxonomy" id="85963"/>
    <lineage>
        <taxon>Bacteria</taxon>
        <taxon>Pseudomonadati</taxon>
        <taxon>Campylobacterota</taxon>
        <taxon>Epsilonproteobacteria</taxon>
        <taxon>Campylobacterales</taxon>
        <taxon>Helicobacteraceae</taxon>
        <taxon>Helicobacter</taxon>
    </lineage>
</organism>
<evidence type="ECO:0000255" key="1">
    <source>
        <dbReference type="HAMAP-Rule" id="MF_00034"/>
    </source>
</evidence>
<evidence type="ECO:0000305" key="2"/>
<reference key="1">
    <citation type="journal article" date="1999" name="Nature">
        <title>Genomic sequence comparison of two unrelated isolates of the human gastric pathogen Helicobacter pylori.</title>
        <authorList>
            <person name="Alm R.A."/>
            <person name="Ling L.-S.L."/>
            <person name="Moir D.T."/>
            <person name="King B.L."/>
            <person name="Brown E.D."/>
            <person name="Doig P.C."/>
            <person name="Smith D.R."/>
            <person name="Noonan B."/>
            <person name="Guild B.C."/>
            <person name="deJonge B.L."/>
            <person name="Carmel G."/>
            <person name="Tummino P.J."/>
            <person name="Caruso A."/>
            <person name="Uria-Nickelsen M."/>
            <person name="Mills D.M."/>
            <person name="Ives C."/>
            <person name="Gibson R."/>
            <person name="Merberg D."/>
            <person name="Mills S.D."/>
            <person name="Jiang Q."/>
            <person name="Taylor D.E."/>
            <person name="Vovis G.F."/>
            <person name="Trust T.J."/>
        </authorList>
    </citation>
    <scope>NUCLEOTIDE SEQUENCE [LARGE SCALE GENOMIC DNA]</scope>
    <source>
        <strain>J99 / ATCC 700824</strain>
    </source>
</reference>
<comment type="function">
    <text evidence="1">The RuvA-RuvB-RuvC complex processes Holliday junction (HJ) DNA during genetic recombination and DNA repair. Endonuclease that resolves HJ intermediates. Cleaves cruciform DNA by making single-stranded nicks across the HJ at symmetrical positions within the homologous arms, yielding a 5'-phosphate and a 3'-hydroxyl group; requires a central core of homology in the junction. The consensus cleavage sequence is 5'-(A/T)TT(C/G)-3'. Cleavage occurs on the 3'-side of the TT dinucleotide at the point of strand exchange. HJ branch migration catalyzed by RuvA-RuvB allows RuvC to scan DNA until it finds its consensus sequence, where it cleaves and resolves the cruciform DNA.</text>
</comment>
<comment type="catalytic activity">
    <reaction evidence="1">
        <text>Endonucleolytic cleavage at a junction such as a reciprocal single-stranded crossover between two homologous DNA duplexes (Holliday junction).</text>
        <dbReference type="EC" id="3.1.21.10"/>
    </reaction>
</comment>
<comment type="cofactor">
    <cofactor evidence="1">
        <name>Mg(2+)</name>
        <dbReference type="ChEBI" id="CHEBI:18420"/>
    </cofactor>
    <text evidence="1">Binds 2 Mg(2+) ion per subunit.</text>
</comment>
<comment type="subunit">
    <text evidence="1">Homodimer which binds Holliday junction (HJ) DNA. The HJ becomes 2-fold symmetrical on binding to RuvC with unstacked arms; it has a different conformation from HJ DNA in complex with RuvA. In the full resolvosome a probable DNA-RuvA(4)-RuvB(12)-RuvC(2) complex forms which resolves the HJ.</text>
</comment>
<comment type="subcellular location">
    <subcellularLocation>
        <location evidence="1">Cytoplasm</location>
    </subcellularLocation>
</comment>
<comment type="similarity">
    <text evidence="1 2">Belongs to the RuvC family.</text>
</comment>
<proteinExistence type="inferred from homology"/>
<accession>Q9ZKX3</accession>